<sequence>MADLIARLREDGIQKRVIQEGRGELPEFQDGTKATFHFRTLHSDPEGSVIDDSRARGKPMELIIGKKFKLPVWETIVRTMREGETAQFLCDVKHTVLYPLVAKSLRNIAEGKDPLEGQRHCCGIAQMHEHSSLGHADLDALQQNPQPLIFHIEMLKVESPGTYQQDPWAMTDEEKAKAVPLIHQEGNRLYREGQVKEAAAKYYDAIACLKNLQMKEQPGSPDWIQLDLQITPLLLNYCQCKLVAQEYYEVLDHCSSILNKYDDNVKAYFKRGKAHAAVWNAQEAQADFAKVLELDPALAPVVSRELRALEARIRQKDEEDKARFRGIFSH</sequence>
<keyword id="KW-0963">Cytoplasm</keyword>
<keyword id="KW-0903">Direct protein sequencing</keyword>
<keyword id="KW-0597">Phosphoprotein</keyword>
<keyword id="KW-1185">Reference proteome</keyword>
<keyword id="KW-0677">Repeat</keyword>
<keyword id="KW-0802">TPR repeat</keyword>
<gene>
    <name type="primary">Aip</name>
    <name type="synonym">Xap2</name>
</gene>
<feature type="chain" id="PRO_0000288800" description="AH receptor-interacting protein">
    <location>
        <begin position="1"/>
        <end position="330"/>
    </location>
</feature>
<feature type="domain" description="PPIase FKBP-type" evidence="4">
    <location>
        <begin position="31"/>
        <end position="121"/>
    </location>
</feature>
<feature type="repeat" description="TPR 1" evidence="3">
    <location>
        <begin position="179"/>
        <end position="212"/>
    </location>
</feature>
<feature type="repeat" description="TPR 2" evidence="2">
    <location>
        <begin position="231"/>
        <end position="264"/>
    </location>
</feature>
<feature type="repeat" description="TPR 3" evidence="3 5">
    <location>
        <begin position="265"/>
        <end position="298"/>
    </location>
</feature>
<feature type="modified residue" description="Phosphoserine" evidence="2">
    <location>
        <position position="43"/>
    </location>
</feature>
<feature type="sequence conflict" description="In Ref. 1; AAN77242." evidence="6" ref="1">
    <original>L</original>
    <variation>F</variation>
    <location>
        <position position="62"/>
    </location>
</feature>
<feature type="sequence conflict" description="In Ref. 1; AAN77242." evidence="6" ref="1">
    <original>L</original>
    <variation>F</variation>
    <location>
        <position position="89"/>
    </location>
</feature>
<comment type="function">
    <text evidence="1">May play a positive role in AHR-mediated (aromatic hydrocarbon receptor) signaling, possibly by influencing its receptivity for ligand and/or its nuclear targeting.</text>
</comment>
<comment type="subunit">
    <text>Interacts with RET in the pituitary gland; this interaction prevents the formation of the AIP-survivin complex.</text>
</comment>
<comment type="interaction">
    <interactant intactId="EBI-1786045">
        <id>Q5FWY5</id>
    </interactant>
    <interactant intactId="EBI-1786062">
        <id>Q01062</id>
        <label>Pde2a</label>
    </interactant>
    <organismsDiffer>false</organismsDiffer>
    <experiments>2</experiments>
</comment>
<comment type="subcellular location">
    <subcellularLocation>
        <location evidence="1">Cytoplasm</location>
    </subcellularLocation>
</comment>
<organism>
    <name type="scientific">Rattus norvegicus</name>
    <name type="common">Rat</name>
    <dbReference type="NCBI Taxonomy" id="10116"/>
    <lineage>
        <taxon>Eukaryota</taxon>
        <taxon>Metazoa</taxon>
        <taxon>Chordata</taxon>
        <taxon>Craniata</taxon>
        <taxon>Vertebrata</taxon>
        <taxon>Euteleostomi</taxon>
        <taxon>Mammalia</taxon>
        <taxon>Eutheria</taxon>
        <taxon>Euarchontoglires</taxon>
        <taxon>Glires</taxon>
        <taxon>Rodentia</taxon>
        <taxon>Myomorpha</taxon>
        <taxon>Muroidea</taxon>
        <taxon>Muridae</taxon>
        <taxon>Murinae</taxon>
        <taxon>Rattus</taxon>
    </lineage>
</organism>
<protein>
    <recommendedName>
        <fullName>AH receptor-interacting protein</fullName>
        <shortName>AIP</shortName>
    </recommendedName>
    <alternativeName>
        <fullName>Aryl-hydrocarbon receptor-interacting protein</fullName>
    </alternativeName>
    <alternativeName>
        <fullName>Immunophilin XAP2</fullName>
    </alternativeName>
</protein>
<proteinExistence type="evidence at protein level"/>
<dbReference type="EMBL" id="AF543560">
    <property type="protein sequence ID" value="AAN77242.1"/>
    <property type="molecule type" value="mRNA"/>
</dbReference>
<dbReference type="EMBL" id="BC089110">
    <property type="protein sequence ID" value="AAH89110.1"/>
    <property type="molecule type" value="mRNA"/>
</dbReference>
<dbReference type="RefSeq" id="NP_758830.2">
    <property type="nucleotide sequence ID" value="NM_172327.3"/>
</dbReference>
<dbReference type="RefSeq" id="XP_006230761.1">
    <property type="nucleotide sequence ID" value="XM_006230699.3"/>
</dbReference>
<dbReference type="RefSeq" id="XP_006230762.1">
    <property type="nucleotide sequence ID" value="XM_006230700.5"/>
</dbReference>
<dbReference type="SMR" id="Q5FWY5"/>
<dbReference type="BioGRID" id="251863">
    <property type="interactions" value="3"/>
</dbReference>
<dbReference type="CORUM" id="Q5FWY5"/>
<dbReference type="FunCoup" id="Q5FWY5">
    <property type="interactions" value="1543"/>
</dbReference>
<dbReference type="IntAct" id="Q5FWY5">
    <property type="interactions" value="2"/>
</dbReference>
<dbReference type="STRING" id="10116.ENSRNOP00000000599"/>
<dbReference type="PhosphoSitePlus" id="Q5FWY5"/>
<dbReference type="jPOST" id="Q5FWY5"/>
<dbReference type="PaxDb" id="10116-ENSRNOP00000000599"/>
<dbReference type="Ensembl" id="ENSRNOT00000091542.2">
    <property type="protein sequence ID" value="ENSRNOP00000075162.1"/>
    <property type="gene ID" value="ENSRNOG00000022289.7"/>
</dbReference>
<dbReference type="GeneID" id="282827"/>
<dbReference type="KEGG" id="rno:282827"/>
<dbReference type="UCSC" id="RGD:628619">
    <property type="organism name" value="rat"/>
</dbReference>
<dbReference type="AGR" id="RGD:628619"/>
<dbReference type="CTD" id="9049"/>
<dbReference type="RGD" id="628619">
    <property type="gene designation" value="Aip"/>
</dbReference>
<dbReference type="eggNOG" id="KOG0545">
    <property type="taxonomic scope" value="Eukaryota"/>
</dbReference>
<dbReference type="GeneTree" id="ENSGT00390000001289"/>
<dbReference type="HOGENOM" id="CLU_052244_0_1_1"/>
<dbReference type="InParanoid" id="Q5FWY5"/>
<dbReference type="OMA" id="SHCCGMM"/>
<dbReference type="OrthoDB" id="5829758at2759"/>
<dbReference type="PhylomeDB" id="Q5FWY5"/>
<dbReference type="TreeFam" id="TF314507"/>
<dbReference type="Reactome" id="R-RNO-8937144">
    <property type="pathway name" value="Aryl hydrocarbon receptor signalling"/>
</dbReference>
<dbReference type="PRO" id="PR:Q5FWY5"/>
<dbReference type="Proteomes" id="UP000002494">
    <property type="component" value="Chromosome 1"/>
</dbReference>
<dbReference type="Bgee" id="ENSRNOG00000022289">
    <property type="expression patterns" value="Expressed in skeletal muscle tissue and 20 other cell types or tissues"/>
</dbReference>
<dbReference type="GO" id="GO:0034751">
    <property type="term" value="C:aryl hydrocarbon receptor complex"/>
    <property type="evidence" value="ECO:0000266"/>
    <property type="project" value="RGD"/>
</dbReference>
<dbReference type="GO" id="GO:0005829">
    <property type="term" value="C:cytosol"/>
    <property type="evidence" value="ECO:0000266"/>
    <property type="project" value="RGD"/>
</dbReference>
<dbReference type="GO" id="GO:0016020">
    <property type="term" value="C:membrane"/>
    <property type="evidence" value="ECO:0000266"/>
    <property type="project" value="RGD"/>
</dbReference>
<dbReference type="GO" id="GO:0005886">
    <property type="term" value="C:plasma membrane"/>
    <property type="evidence" value="ECO:0000266"/>
    <property type="project" value="RGD"/>
</dbReference>
<dbReference type="GO" id="GO:0017162">
    <property type="term" value="F:aryl hydrocarbon receptor binding"/>
    <property type="evidence" value="ECO:0000266"/>
    <property type="project" value="RGD"/>
</dbReference>
<dbReference type="GO" id="GO:0019899">
    <property type="term" value="F:enzyme binding"/>
    <property type="evidence" value="ECO:0000353"/>
    <property type="project" value="RGD"/>
</dbReference>
<dbReference type="GO" id="GO:0036004">
    <property type="term" value="F:GAF domain binding"/>
    <property type="evidence" value="ECO:0000266"/>
    <property type="project" value="RGD"/>
</dbReference>
<dbReference type="GO" id="GO:0003755">
    <property type="term" value="F:peptidyl-prolyl cis-trans isomerase activity"/>
    <property type="evidence" value="ECO:0000266"/>
    <property type="project" value="RGD"/>
</dbReference>
<dbReference type="GO" id="GO:0003712">
    <property type="term" value="F:transcription coregulator activity"/>
    <property type="evidence" value="ECO:0000266"/>
    <property type="project" value="RGD"/>
</dbReference>
<dbReference type="GO" id="GO:0051082">
    <property type="term" value="F:unfolded protein binding"/>
    <property type="evidence" value="ECO:0000250"/>
    <property type="project" value="HGNC-UCL"/>
</dbReference>
<dbReference type="GO" id="GO:0010737">
    <property type="term" value="P:protein kinase A signaling"/>
    <property type="evidence" value="ECO:0000314"/>
    <property type="project" value="RGD"/>
</dbReference>
<dbReference type="GO" id="GO:0051604">
    <property type="term" value="P:protein maturation"/>
    <property type="evidence" value="ECO:0000250"/>
    <property type="project" value="HGNC-UCL"/>
</dbReference>
<dbReference type="GO" id="GO:0006626">
    <property type="term" value="P:protein targeting to mitochondrion"/>
    <property type="evidence" value="ECO:0000250"/>
    <property type="project" value="HGNC-UCL"/>
</dbReference>
<dbReference type="GO" id="GO:0006805">
    <property type="term" value="P:xenobiotic metabolic process"/>
    <property type="evidence" value="ECO:0000266"/>
    <property type="project" value="RGD"/>
</dbReference>
<dbReference type="FunFam" id="1.25.40.10:FF:000052">
    <property type="entry name" value="Aryl-hydrocarbon-interacting protein-like 1"/>
    <property type="match status" value="1"/>
</dbReference>
<dbReference type="FunFam" id="3.10.50.40:FF:000018">
    <property type="entry name" value="Aryl-hydrocarbon-interacting protein-like 1"/>
    <property type="match status" value="1"/>
</dbReference>
<dbReference type="Gene3D" id="3.10.50.40">
    <property type="match status" value="1"/>
</dbReference>
<dbReference type="Gene3D" id="1.25.40.10">
    <property type="entry name" value="Tetratricopeptide repeat domain"/>
    <property type="match status" value="1"/>
</dbReference>
<dbReference type="InterPro" id="IPR039663">
    <property type="entry name" value="AIP/AIPL1/TTC9"/>
</dbReference>
<dbReference type="InterPro" id="IPR056277">
    <property type="entry name" value="PPIase_AIP"/>
</dbReference>
<dbReference type="InterPro" id="IPR046357">
    <property type="entry name" value="PPIase_dom_sf"/>
</dbReference>
<dbReference type="InterPro" id="IPR001179">
    <property type="entry name" value="PPIase_FKBP_dom"/>
</dbReference>
<dbReference type="InterPro" id="IPR011990">
    <property type="entry name" value="TPR-like_helical_dom_sf"/>
</dbReference>
<dbReference type="InterPro" id="IPR019734">
    <property type="entry name" value="TPR_rpt"/>
</dbReference>
<dbReference type="PANTHER" id="PTHR11242:SF3">
    <property type="entry name" value="AH RECEPTOR-INTERACTING PROTEIN"/>
    <property type="match status" value="1"/>
</dbReference>
<dbReference type="PANTHER" id="PTHR11242">
    <property type="entry name" value="ARYL HYDROCARBON RECEPTOR INTERACTING PROTEIN RELATED"/>
    <property type="match status" value="1"/>
</dbReference>
<dbReference type="Pfam" id="PF23322">
    <property type="entry name" value="PPIase_AIP"/>
    <property type="match status" value="1"/>
</dbReference>
<dbReference type="SUPFAM" id="SSF54534">
    <property type="entry name" value="FKBP-like"/>
    <property type="match status" value="1"/>
</dbReference>
<dbReference type="SUPFAM" id="SSF48452">
    <property type="entry name" value="TPR-like"/>
    <property type="match status" value="1"/>
</dbReference>
<dbReference type="PROSITE" id="PS50059">
    <property type="entry name" value="FKBP_PPIASE"/>
    <property type="match status" value="1"/>
</dbReference>
<dbReference type="PROSITE" id="PS50005">
    <property type="entry name" value="TPR"/>
    <property type="match status" value="1"/>
</dbReference>
<dbReference type="PROSITE" id="PS50293">
    <property type="entry name" value="TPR_REGION"/>
    <property type="match status" value="1"/>
</dbReference>
<reference key="1">
    <citation type="journal article" date="2003" name="J. Biol. Chem.">
        <title>Attenuation of the activity of the cAMP-specific phosphodiesterase PDE4A5 by interaction with the immunophilin XAP2.</title>
        <authorList>
            <person name="Bolger G.B."/>
            <person name="Peden A.H."/>
            <person name="Steele M.R."/>
            <person name="MacKenzie C."/>
            <person name="McEwan D.G."/>
            <person name="Wallace D.A."/>
            <person name="Huston E."/>
            <person name="Baillie G.S."/>
            <person name="Houslay M.D."/>
        </authorList>
    </citation>
    <scope>NUCLEOTIDE SEQUENCE [MRNA]</scope>
    <source>
        <strain>Sprague-Dawley</strain>
    </source>
</reference>
<reference key="2">
    <citation type="journal article" date="2004" name="Genome Res.">
        <title>The status, quality, and expansion of the NIH full-length cDNA project: the Mammalian Gene Collection (MGC).</title>
        <authorList>
            <consortium name="The MGC Project Team"/>
        </authorList>
    </citation>
    <scope>NUCLEOTIDE SEQUENCE [LARGE SCALE MRNA]</scope>
    <source>
        <tissue>Brain</tissue>
    </source>
</reference>
<reference key="3">
    <citation type="submission" date="2007-04" db="UniProtKB">
        <authorList>
            <person name="Lubec G."/>
            <person name="Diao W."/>
        </authorList>
    </citation>
    <scope>PROTEIN SEQUENCE OF 68-78; 242-260 AND 291-304</scope>
    <scope>IDENTIFICATION BY MASS SPECTROMETRY</scope>
    <source>
        <strain>Sprague-Dawley</strain>
        <tissue>Hippocampus</tissue>
    </source>
</reference>
<accession>Q5FWY5</accession>
<accession>Q8CGW7</accession>
<evidence type="ECO:0000250" key="1"/>
<evidence type="ECO:0000250" key="2">
    <source>
        <dbReference type="UniProtKB" id="O00170"/>
    </source>
</evidence>
<evidence type="ECO:0000255" key="3"/>
<evidence type="ECO:0000255" key="4">
    <source>
        <dbReference type="PROSITE-ProRule" id="PRU00277"/>
    </source>
</evidence>
<evidence type="ECO:0000255" key="5">
    <source>
        <dbReference type="PROSITE-ProRule" id="PRU00339"/>
    </source>
</evidence>
<evidence type="ECO:0000305" key="6"/>
<name>AIP_RAT</name>